<protein>
    <recommendedName>
        <fullName evidence="1">Ferrochelatase</fullName>
        <ecNumber evidence="1">4.98.1.1</ecNumber>
    </recommendedName>
    <alternativeName>
        <fullName evidence="1">Heme synthase</fullName>
    </alternativeName>
    <alternativeName>
        <fullName evidence="1">Protoheme ferro-lyase</fullName>
    </alternativeName>
</protein>
<keyword id="KW-0963">Cytoplasm</keyword>
<keyword id="KW-0350">Heme biosynthesis</keyword>
<keyword id="KW-0408">Iron</keyword>
<keyword id="KW-0456">Lyase</keyword>
<keyword id="KW-0479">Metal-binding</keyword>
<keyword id="KW-0627">Porphyrin biosynthesis</keyword>
<gene>
    <name evidence="1" type="primary">hemH</name>
    <name type="ordered locus">Psyr_0967</name>
</gene>
<evidence type="ECO:0000255" key="1">
    <source>
        <dbReference type="HAMAP-Rule" id="MF_00323"/>
    </source>
</evidence>
<reference key="1">
    <citation type="journal article" date="2005" name="Proc. Natl. Acad. Sci. U.S.A.">
        <title>Comparison of the complete genome sequences of Pseudomonas syringae pv. syringae B728a and pv. tomato DC3000.</title>
        <authorList>
            <person name="Feil H."/>
            <person name="Feil W.S."/>
            <person name="Chain P."/>
            <person name="Larimer F."/>
            <person name="Dibartolo G."/>
            <person name="Copeland A."/>
            <person name="Lykidis A."/>
            <person name="Trong S."/>
            <person name="Nolan M."/>
            <person name="Goltsman E."/>
            <person name="Thiel J."/>
            <person name="Malfatti S."/>
            <person name="Loper J.E."/>
            <person name="Lapidus A."/>
            <person name="Detter J.C."/>
            <person name="Land M."/>
            <person name="Richardson P.M."/>
            <person name="Kyrpides N.C."/>
            <person name="Ivanova N."/>
            <person name="Lindow S.E."/>
        </authorList>
    </citation>
    <scope>NUCLEOTIDE SEQUENCE [LARGE SCALE GENOMIC DNA]</scope>
    <source>
        <strain>B728a</strain>
    </source>
</reference>
<comment type="function">
    <text evidence="1">Catalyzes the ferrous insertion into protoporphyrin IX.</text>
</comment>
<comment type="catalytic activity">
    <reaction evidence="1">
        <text>heme b + 2 H(+) = protoporphyrin IX + Fe(2+)</text>
        <dbReference type="Rhea" id="RHEA:22584"/>
        <dbReference type="ChEBI" id="CHEBI:15378"/>
        <dbReference type="ChEBI" id="CHEBI:29033"/>
        <dbReference type="ChEBI" id="CHEBI:57306"/>
        <dbReference type="ChEBI" id="CHEBI:60344"/>
        <dbReference type="EC" id="4.98.1.1"/>
    </reaction>
</comment>
<comment type="pathway">
    <text evidence="1">Porphyrin-containing compound metabolism; protoheme biosynthesis; protoheme from protoporphyrin-IX: step 1/1.</text>
</comment>
<comment type="subcellular location">
    <subcellularLocation>
        <location evidence="1">Cytoplasm</location>
    </subcellularLocation>
</comment>
<comment type="similarity">
    <text evidence="1">Belongs to the ferrochelatase family.</text>
</comment>
<feature type="chain" id="PRO_1000019351" description="Ferrochelatase">
    <location>
        <begin position="1"/>
        <end position="340"/>
    </location>
</feature>
<feature type="binding site" evidence="1">
    <location>
        <position position="189"/>
    </location>
    <ligand>
        <name>Fe cation</name>
        <dbReference type="ChEBI" id="CHEBI:24875"/>
    </ligand>
</feature>
<feature type="binding site" evidence="1">
    <location>
        <position position="292"/>
    </location>
    <ligand>
        <name>Fe cation</name>
        <dbReference type="ChEBI" id="CHEBI:24875"/>
    </ligand>
</feature>
<proteinExistence type="inferred from homology"/>
<organism>
    <name type="scientific">Pseudomonas syringae pv. syringae (strain B728a)</name>
    <dbReference type="NCBI Taxonomy" id="205918"/>
    <lineage>
        <taxon>Bacteria</taxon>
        <taxon>Pseudomonadati</taxon>
        <taxon>Pseudomonadota</taxon>
        <taxon>Gammaproteobacteria</taxon>
        <taxon>Pseudomonadales</taxon>
        <taxon>Pseudomonadaceae</taxon>
        <taxon>Pseudomonas</taxon>
        <taxon>Pseudomonas syringae</taxon>
    </lineage>
</organism>
<name>HEMH_PSEU2</name>
<sequence>MTDHALLLVNLGSPASTQVADVRSYLNQFLMDPYVIDLPWPVRRLLVSLILIKRPEQSAHAYASIWWDEGSPLVVLSKRLQQAMKKEWSHGPVELAMRYGEPSIETVLTRLAEQGFKKVTLAPLYPQFADSTVTTVIEEAKRVVRAKSLKMQFSVLQPFYDQPEYLSALVESVRPHLEQPYDHLLLSFHGLPERHLHKLDPTGKHCLKDDCCMTAPAEVLATCYRAQCIQSAAAFAKRMGIADGKWSVSFQSRLGRAKWIEPYTEAHLDELAAKGVKKLLVMCPAFVADCIETLEEIGDRGAEQFKEAGGEELILIPCLNDDPNWAKELNRLCERAPLML</sequence>
<dbReference type="EC" id="4.98.1.1" evidence="1"/>
<dbReference type="EMBL" id="CP000075">
    <property type="protein sequence ID" value="AAY36023.1"/>
    <property type="molecule type" value="Genomic_DNA"/>
</dbReference>
<dbReference type="RefSeq" id="WP_004406934.1">
    <property type="nucleotide sequence ID" value="NC_007005.1"/>
</dbReference>
<dbReference type="RefSeq" id="YP_234061.1">
    <property type="nucleotide sequence ID" value="NC_007005.1"/>
</dbReference>
<dbReference type="SMR" id="Q4ZXU9"/>
<dbReference type="STRING" id="205918.Psyr_0967"/>
<dbReference type="KEGG" id="psb:Psyr_0967"/>
<dbReference type="PATRIC" id="fig|205918.7.peg.996"/>
<dbReference type="eggNOG" id="COG0276">
    <property type="taxonomic scope" value="Bacteria"/>
</dbReference>
<dbReference type="HOGENOM" id="CLU_018884_0_1_6"/>
<dbReference type="OrthoDB" id="9809741at2"/>
<dbReference type="UniPathway" id="UPA00252">
    <property type="reaction ID" value="UER00325"/>
</dbReference>
<dbReference type="Proteomes" id="UP000000426">
    <property type="component" value="Chromosome"/>
</dbReference>
<dbReference type="GO" id="GO:0005737">
    <property type="term" value="C:cytoplasm"/>
    <property type="evidence" value="ECO:0007669"/>
    <property type="project" value="UniProtKB-SubCell"/>
</dbReference>
<dbReference type="GO" id="GO:0004325">
    <property type="term" value="F:ferrochelatase activity"/>
    <property type="evidence" value="ECO:0007669"/>
    <property type="project" value="UniProtKB-UniRule"/>
</dbReference>
<dbReference type="GO" id="GO:0046872">
    <property type="term" value="F:metal ion binding"/>
    <property type="evidence" value="ECO:0007669"/>
    <property type="project" value="UniProtKB-KW"/>
</dbReference>
<dbReference type="GO" id="GO:0006783">
    <property type="term" value="P:heme biosynthetic process"/>
    <property type="evidence" value="ECO:0007669"/>
    <property type="project" value="UniProtKB-UniRule"/>
</dbReference>
<dbReference type="CDD" id="cd00419">
    <property type="entry name" value="Ferrochelatase_C"/>
    <property type="match status" value="1"/>
</dbReference>
<dbReference type="CDD" id="cd03411">
    <property type="entry name" value="Ferrochelatase_N"/>
    <property type="match status" value="1"/>
</dbReference>
<dbReference type="Gene3D" id="3.40.50.1400">
    <property type="match status" value="2"/>
</dbReference>
<dbReference type="HAMAP" id="MF_00323">
    <property type="entry name" value="Ferrochelatase"/>
    <property type="match status" value="1"/>
</dbReference>
<dbReference type="InterPro" id="IPR001015">
    <property type="entry name" value="Ferrochelatase"/>
</dbReference>
<dbReference type="InterPro" id="IPR033644">
    <property type="entry name" value="Ferrochelatase_C"/>
</dbReference>
<dbReference type="InterPro" id="IPR033659">
    <property type="entry name" value="Ferrochelatase_N"/>
</dbReference>
<dbReference type="NCBIfam" id="TIGR00109">
    <property type="entry name" value="hemH"/>
    <property type="match status" value="1"/>
</dbReference>
<dbReference type="PANTHER" id="PTHR11108">
    <property type="entry name" value="FERROCHELATASE"/>
    <property type="match status" value="1"/>
</dbReference>
<dbReference type="PANTHER" id="PTHR11108:SF1">
    <property type="entry name" value="FERROCHELATASE, MITOCHONDRIAL"/>
    <property type="match status" value="1"/>
</dbReference>
<dbReference type="Pfam" id="PF00762">
    <property type="entry name" value="Ferrochelatase"/>
    <property type="match status" value="1"/>
</dbReference>
<dbReference type="SUPFAM" id="SSF53800">
    <property type="entry name" value="Chelatase"/>
    <property type="match status" value="1"/>
</dbReference>
<accession>Q4ZXU9</accession>